<gene>
    <name evidence="7" type="ordered locus">Pmen_3454</name>
</gene>
<proteinExistence type="evidence at protein level"/>
<keyword id="KW-0001">2Fe-2S</keyword>
<keyword id="KW-0285">Flavoprotein</keyword>
<keyword id="KW-0288">FMN</keyword>
<keyword id="KW-0408">Iron</keyword>
<keyword id="KW-0411">Iron-sulfur</keyword>
<keyword id="KW-0479">Metal-binding</keyword>
<keyword id="KW-0521">NADP</keyword>
<keyword id="KW-0560">Oxidoreductase</keyword>
<evidence type="ECO:0000255" key="1">
    <source>
        <dbReference type="PROSITE-ProRule" id="PRU00465"/>
    </source>
</evidence>
<evidence type="ECO:0000255" key="2">
    <source>
        <dbReference type="PROSITE-ProRule" id="PRU00716"/>
    </source>
</evidence>
<evidence type="ECO:0000269" key="3">
    <source>
    </source>
</evidence>
<evidence type="ECO:0000303" key="4">
    <source>
    </source>
</evidence>
<evidence type="ECO:0000305" key="5"/>
<evidence type="ECO:0000305" key="6">
    <source>
    </source>
</evidence>
<evidence type="ECO:0000312" key="7">
    <source>
        <dbReference type="EMBL" id="ABP86204.1"/>
    </source>
</evidence>
<accession>A4XXY8</accession>
<sequence length="309" mass="34004">MSTLLDVRVAAIRELTPVIREYSFEALASTLPGFSAGSHVQLHLPNGRRNAYSLLSDPADTRQYRIAVRQQDASRGGSRYLHQHLKVGDRLRLSPPANLFPLHGEAQKHILVAAGIGITPFLAYSQELLRRGADFELHYAYRAGSSDAYVDELRQQLGPRLHEYLSGQRRLDLASLLQGRTLGTHVYACGPQSLLLDLQEQASAQGWSPRRVHWEAFAAAEPGQPFRVELARSGQQLEVAADESLLEALEAAGVEVPNLCRGGVCGQCQTPWLKGDVEHRDHFLSANERTSSLMPCVSRGCGSPILLDL</sequence>
<comment type="function">
    <text evidence="3">Component of the heme-dependent oxidative N-demethylase (HODM) enzyme, that catalyzes the NADPH-dependent oxidation of dimethylamine (DMA) to methylamine (MA) and formaldehyde. Functions in bacterial methylated amine catabolism, linking alkylamine oxidation to the tetrahydrofolate C1 pool. The beta subunit of HODM binds FMN and a 2Fe-2S cluster, and likely reduces the ferric heme iron of the alpha subunit to ferrous using NADPH.</text>
</comment>
<comment type="cofactor">
    <cofactor evidence="1 3">
        <name>[2Fe-2S] cluster</name>
        <dbReference type="ChEBI" id="CHEBI:190135"/>
    </cofactor>
    <text evidence="1 3">Binds 1 2Fe-2S cluster per subunit.</text>
</comment>
<comment type="cofactor">
    <cofactor evidence="3">
        <name>FMN</name>
        <dbReference type="ChEBI" id="CHEBI:58210"/>
    </cofactor>
</comment>
<comment type="subunit">
    <text evidence="3">The heme-dependent oxidative N-demethylase (HODM) is a heterotetramer composed of a catalytic alpha subunit, a FMN/2Fe-2S-dependent oxidoreductase beta subunit, a gamma subunit with putative aminotransferase activity, and a delta subunit of unknown function.</text>
</comment>
<comment type="similarity">
    <text evidence="5">Belongs to the PDR/VanB family.</text>
</comment>
<dbReference type="EC" id="1.6.2.-" evidence="6"/>
<dbReference type="EMBL" id="CP000680">
    <property type="protein sequence ID" value="ABP86204.1"/>
    <property type="molecule type" value="Genomic_DNA"/>
</dbReference>
<dbReference type="STRING" id="399739.Pmen_3454"/>
<dbReference type="KEGG" id="pmy:Pmen_3454"/>
<dbReference type="eggNOG" id="COG1018">
    <property type="taxonomic scope" value="Bacteria"/>
</dbReference>
<dbReference type="HOGENOM" id="CLU_003827_17_0_6"/>
<dbReference type="OrthoDB" id="9801223at2"/>
<dbReference type="GO" id="GO:0051537">
    <property type="term" value="F:2 iron, 2 sulfur cluster binding"/>
    <property type="evidence" value="ECO:0007669"/>
    <property type="project" value="UniProtKB-KW"/>
</dbReference>
<dbReference type="GO" id="GO:0046872">
    <property type="term" value="F:metal ion binding"/>
    <property type="evidence" value="ECO:0007669"/>
    <property type="project" value="UniProtKB-KW"/>
</dbReference>
<dbReference type="GO" id="GO:0016491">
    <property type="term" value="F:oxidoreductase activity"/>
    <property type="evidence" value="ECO:0007669"/>
    <property type="project" value="UniProtKB-KW"/>
</dbReference>
<dbReference type="CDD" id="cd00207">
    <property type="entry name" value="fer2"/>
    <property type="match status" value="1"/>
</dbReference>
<dbReference type="CDD" id="cd06185">
    <property type="entry name" value="PDR_like"/>
    <property type="match status" value="1"/>
</dbReference>
<dbReference type="Gene3D" id="3.10.20.30">
    <property type="match status" value="1"/>
</dbReference>
<dbReference type="Gene3D" id="3.40.50.80">
    <property type="entry name" value="Nucleotide-binding domain of ferredoxin-NADP reductase (FNR) module"/>
    <property type="match status" value="1"/>
</dbReference>
<dbReference type="Gene3D" id="2.40.30.10">
    <property type="entry name" value="Translation factors"/>
    <property type="match status" value="1"/>
</dbReference>
<dbReference type="InterPro" id="IPR036010">
    <property type="entry name" value="2Fe-2S_ferredoxin-like_sf"/>
</dbReference>
<dbReference type="InterPro" id="IPR001041">
    <property type="entry name" value="2Fe-2S_ferredoxin-type"/>
</dbReference>
<dbReference type="InterPro" id="IPR006058">
    <property type="entry name" value="2Fe2S_fd_BS"/>
</dbReference>
<dbReference type="InterPro" id="IPR012675">
    <property type="entry name" value="Beta-grasp_dom_sf"/>
</dbReference>
<dbReference type="InterPro" id="IPR054582">
    <property type="entry name" value="DmmA-like_N"/>
</dbReference>
<dbReference type="InterPro" id="IPR017927">
    <property type="entry name" value="FAD-bd_FR_type"/>
</dbReference>
<dbReference type="InterPro" id="IPR039261">
    <property type="entry name" value="FNR_nucleotide-bd"/>
</dbReference>
<dbReference type="InterPro" id="IPR050415">
    <property type="entry name" value="MRET"/>
</dbReference>
<dbReference type="InterPro" id="IPR017938">
    <property type="entry name" value="Riboflavin_synthase-like_b-brl"/>
</dbReference>
<dbReference type="PANTHER" id="PTHR47354:SF1">
    <property type="entry name" value="CARNITINE MONOOXYGENASE REDUCTASE SUBUNIT"/>
    <property type="match status" value="1"/>
</dbReference>
<dbReference type="PANTHER" id="PTHR47354">
    <property type="entry name" value="NADH OXIDOREDUCTASE HCR"/>
    <property type="match status" value="1"/>
</dbReference>
<dbReference type="Pfam" id="PF22290">
    <property type="entry name" value="DmmA-like_N"/>
    <property type="match status" value="1"/>
</dbReference>
<dbReference type="Pfam" id="PF00111">
    <property type="entry name" value="Fer2"/>
    <property type="match status" value="1"/>
</dbReference>
<dbReference type="PRINTS" id="PR00409">
    <property type="entry name" value="PHDIOXRDTASE"/>
</dbReference>
<dbReference type="SUPFAM" id="SSF54292">
    <property type="entry name" value="2Fe-2S ferredoxin-like"/>
    <property type="match status" value="1"/>
</dbReference>
<dbReference type="SUPFAM" id="SSF52343">
    <property type="entry name" value="Ferredoxin reductase-like, C-terminal NADP-linked domain"/>
    <property type="match status" value="1"/>
</dbReference>
<dbReference type="SUPFAM" id="SSF63380">
    <property type="entry name" value="Riboflavin synthase domain-like"/>
    <property type="match status" value="1"/>
</dbReference>
<dbReference type="PROSITE" id="PS00197">
    <property type="entry name" value="2FE2S_FER_1"/>
    <property type="match status" value="1"/>
</dbReference>
<dbReference type="PROSITE" id="PS51085">
    <property type="entry name" value="2FE2S_FER_2"/>
    <property type="match status" value="1"/>
</dbReference>
<dbReference type="PROSITE" id="PS51384">
    <property type="entry name" value="FAD_FR"/>
    <property type="match status" value="1"/>
</dbReference>
<name>HODMB_ECTM1</name>
<organism>
    <name type="scientific">Ectopseudomonas mendocina (strain ymp)</name>
    <name type="common">Pseudomonas mendocina</name>
    <dbReference type="NCBI Taxonomy" id="399739"/>
    <lineage>
        <taxon>Bacteria</taxon>
        <taxon>Pseudomonadati</taxon>
        <taxon>Pseudomonadota</taxon>
        <taxon>Gammaproteobacteria</taxon>
        <taxon>Pseudomonadales</taxon>
        <taxon>Pseudomonadaceae</taxon>
        <taxon>Ectopseudomonas</taxon>
    </lineage>
</organism>
<reference key="1">
    <citation type="submission" date="2007-04" db="EMBL/GenBank/DDBJ databases">
        <title>Complete sequence of Pseudomonas mendocina ymp.</title>
        <authorList>
            <consortium name="US DOE Joint Genome Institute"/>
            <person name="Copeland A."/>
            <person name="Lucas S."/>
            <person name="Lapidus A."/>
            <person name="Barry K."/>
            <person name="Glavina del Rio T."/>
            <person name="Dalin E."/>
            <person name="Tice H."/>
            <person name="Pitluck S."/>
            <person name="Kiss H."/>
            <person name="Brettin T."/>
            <person name="Detter J.C."/>
            <person name="Bruce D."/>
            <person name="Han C."/>
            <person name="Schmutz J."/>
            <person name="Larimer F."/>
            <person name="Land M."/>
            <person name="Hauser L."/>
            <person name="Kyrpides N."/>
            <person name="Mikhailova N."/>
            <person name="Hersman L."/>
            <person name="Dubois J."/>
            <person name="Maurice P."/>
            <person name="Richardson P."/>
        </authorList>
    </citation>
    <scope>NUCLEOTIDE SEQUENCE [LARGE SCALE GENOMIC DNA]</scope>
    <source>
        <strain>ymp</strain>
    </source>
</reference>
<reference key="2">
    <citation type="journal article" date="2016" name="Nature">
        <title>An oxidative N-demethylase reveals PAS transition from ubiquitous sensor to enzyme.</title>
        <authorList>
            <person name="Ortmayer M."/>
            <person name="Lafite P."/>
            <person name="Menon B.R."/>
            <person name="Tralau T."/>
            <person name="Fisher K."/>
            <person name="Denkhaus L."/>
            <person name="Scrutton N.S."/>
            <person name="Rigby S.E."/>
            <person name="Munro A.W."/>
            <person name="Hay S."/>
            <person name="Leys D."/>
        </authorList>
    </citation>
    <scope>FUNCTION</scope>
    <scope>COFACTOR</scope>
    <scope>SUBUNIT</scope>
</reference>
<protein>
    <recommendedName>
        <fullName evidence="4">Heme-dependent oxidative N-demethylase beta subunit</fullName>
        <shortName evidence="4">HODM beta subunit</shortName>
        <ecNumber evidence="6">1.6.2.-</ecNumber>
    </recommendedName>
</protein>
<feature type="chain" id="PRO_0000461802" description="Heme-dependent oxidative N-demethylase beta subunit">
    <location>
        <begin position="1"/>
        <end position="309"/>
    </location>
</feature>
<feature type="domain" description="FAD-binding FR-type" evidence="2">
    <location>
        <begin position="2"/>
        <end position="103"/>
    </location>
</feature>
<feature type="domain" description="2Fe-2S ferredoxin-type" evidence="1">
    <location>
        <begin position="226"/>
        <end position="309"/>
    </location>
</feature>
<feature type="binding site" evidence="1">
    <location>
        <position position="260"/>
    </location>
    <ligand>
        <name>[2Fe-2S] cluster</name>
        <dbReference type="ChEBI" id="CHEBI:190135"/>
    </ligand>
</feature>
<feature type="binding site" evidence="1">
    <location>
        <position position="265"/>
    </location>
    <ligand>
        <name>[2Fe-2S] cluster</name>
        <dbReference type="ChEBI" id="CHEBI:190135"/>
    </ligand>
</feature>
<feature type="binding site" evidence="1">
    <location>
        <position position="268"/>
    </location>
    <ligand>
        <name>[2Fe-2S] cluster</name>
        <dbReference type="ChEBI" id="CHEBI:190135"/>
    </ligand>
</feature>
<feature type="binding site" evidence="1">
    <location>
        <position position="296"/>
    </location>
    <ligand>
        <name>[2Fe-2S] cluster</name>
        <dbReference type="ChEBI" id="CHEBI:190135"/>
    </ligand>
</feature>